<keyword id="KW-1185">Reference proteome</keyword>
<evidence type="ECO:0000255" key="1">
    <source>
        <dbReference type="HAMAP-Rule" id="MF_00758"/>
    </source>
</evidence>
<proteinExistence type="inferred from homology"/>
<protein>
    <recommendedName>
        <fullName evidence="1">UPF0301 protein PP_4995</fullName>
    </recommendedName>
</protein>
<dbReference type="EMBL" id="AE015451">
    <property type="protein sequence ID" value="AAN70561.1"/>
    <property type="molecule type" value="Genomic_DNA"/>
</dbReference>
<dbReference type="RefSeq" id="NP_747097.1">
    <property type="nucleotide sequence ID" value="NC_002947.4"/>
</dbReference>
<dbReference type="RefSeq" id="WP_003249318.1">
    <property type="nucleotide sequence ID" value="NZ_CP169744.1"/>
</dbReference>
<dbReference type="SMR" id="Q88D33"/>
<dbReference type="STRING" id="160488.PP_4995"/>
<dbReference type="PaxDb" id="160488-PP_4995"/>
<dbReference type="KEGG" id="ppu:PP_4995"/>
<dbReference type="PATRIC" id="fig|160488.4.peg.5336"/>
<dbReference type="eggNOG" id="COG1678">
    <property type="taxonomic scope" value="Bacteria"/>
</dbReference>
<dbReference type="HOGENOM" id="CLU_057596_1_0_6"/>
<dbReference type="OrthoDB" id="9807486at2"/>
<dbReference type="PhylomeDB" id="Q88D33"/>
<dbReference type="BioCyc" id="PPUT160488:G1G01-5340-MONOMER"/>
<dbReference type="Proteomes" id="UP000000556">
    <property type="component" value="Chromosome"/>
</dbReference>
<dbReference type="GO" id="GO:0005829">
    <property type="term" value="C:cytosol"/>
    <property type="evidence" value="ECO:0007669"/>
    <property type="project" value="TreeGrafter"/>
</dbReference>
<dbReference type="Gene3D" id="3.40.1740.10">
    <property type="entry name" value="VC0467-like"/>
    <property type="match status" value="1"/>
</dbReference>
<dbReference type="HAMAP" id="MF_00758">
    <property type="entry name" value="UPF0301"/>
    <property type="match status" value="1"/>
</dbReference>
<dbReference type="InterPro" id="IPR003774">
    <property type="entry name" value="AlgH-like"/>
</dbReference>
<dbReference type="NCBIfam" id="NF001266">
    <property type="entry name" value="PRK00228.1-1"/>
    <property type="match status" value="1"/>
</dbReference>
<dbReference type="PANTHER" id="PTHR30327">
    <property type="entry name" value="UNCHARACTERIZED PROTEIN YQGE"/>
    <property type="match status" value="1"/>
</dbReference>
<dbReference type="PANTHER" id="PTHR30327:SF1">
    <property type="entry name" value="UPF0301 PROTEIN YQGE"/>
    <property type="match status" value="1"/>
</dbReference>
<dbReference type="Pfam" id="PF02622">
    <property type="entry name" value="DUF179"/>
    <property type="match status" value="1"/>
</dbReference>
<dbReference type="SUPFAM" id="SSF143456">
    <property type="entry name" value="VC0467-like"/>
    <property type="match status" value="1"/>
</dbReference>
<comment type="similarity">
    <text evidence="1">Belongs to the UPF0301 (AlgH) family.</text>
</comment>
<accession>Q88D33</accession>
<name>Y4995_PSEPK</name>
<sequence length="189" mass="20229">MKTLAPSYLKHQFLIAMPHMADPNFAQTLTYIVEHNEHGAMGLVVNRPQELSLADILEQLRPDETPPASTLQVPIYQGGPVQTDRGFVLHSSECSFQASVALEGLSLTTSQDILLAIAAGVGPKQSLITLGYAGWEAGQLEAELADNAWLNCPFDPEIVFGMASDLRLEAAAASLGINLHLLTSQAGHA</sequence>
<reference key="1">
    <citation type="journal article" date="2002" name="Environ. Microbiol.">
        <title>Complete genome sequence and comparative analysis of the metabolically versatile Pseudomonas putida KT2440.</title>
        <authorList>
            <person name="Nelson K.E."/>
            <person name="Weinel C."/>
            <person name="Paulsen I.T."/>
            <person name="Dodson R.J."/>
            <person name="Hilbert H."/>
            <person name="Martins dos Santos V.A.P."/>
            <person name="Fouts D.E."/>
            <person name="Gill S.R."/>
            <person name="Pop M."/>
            <person name="Holmes M."/>
            <person name="Brinkac L.M."/>
            <person name="Beanan M.J."/>
            <person name="DeBoy R.T."/>
            <person name="Daugherty S.C."/>
            <person name="Kolonay J.F."/>
            <person name="Madupu R."/>
            <person name="Nelson W.C."/>
            <person name="White O."/>
            <person name="Peterson J.D."/>
            <person name="Khouri H.M."/>
            <person name="Hance I."/>
            <person name="Chris Lee P."/>
            <person name="Holtzapple E.K."/>
            <person name="Scanlan D."/>
            <person name="Tran K."/>
            <person name="Moazzez A."/>
            <person name="Utterback T.R."/>
            <person name="Rizzo M."/>
            <person name="Lee K."/>
            <person name="Kosack D."/>
            <person name="Moestl D."/>
            <person name="Wedler H."/>
            <person name="Lauber J."/>
            <person name="Stjepandic D."/>
            <person name="Hoheisel J."/>
            <person name="Straetz M."/>
            <person name="Heim S."/>
            <person name="Kiewitz C."/>
            <person name="Eisen J.A."/>
            <person name="Timmis K.N."/>
            <person name="Duesterhoeft A."/>
            <person name="Tuemmler B."/>
            <person name="Fraser C.M."/>
        </authorList>
    </citation>
    <scope>NUCLEOTIDE SEQUENCE [LARGE SCALE GENOMIC DNA]</scope>
    <source>
        <strain>ATCC 47054 / DSM 6125 / CFBP 8728 / NCIMB 11950 / KT2440</strain>
    </source>
</reference>
<gene>
    <name type="ordered locus">PP_4995</name>
</gene>
<organism>
    <name type="scientific">Pseudomonas putida (strain ATCC 47054 / DSM 6125 / CFBP 8728 / NCIMB 11950 / KT2440)</name>
    <dbReference type="NCBI Taxonomy" id="160488"/>
    <lineage>
        <taxon>Bacteria</taxon>
        <taxon>Pseudomonadati</taxon>
        <taxon>Pseudomonadota</taxon>
        <taxon>Gammaproteobacteria</taxon>
        <taxon>Pseudomonadales</taxon>
        <taxon>Pseudomonadaceae</taxon>
        <taxon>Pseudomonas</taxon>
    </lineage>
</organism>
<feature type="chain" id="PRO_0000214337" description="UPF0301 protein PP_4995">
    <location>
        <begin position="1"/>
        <end position="189"/>
    </location>
</feature>